<keyword id="KW-0066">ATP synthesis</keyword>
<keyword id="KW-0067">ATP-binding</keyword>
<keyword id="KW-1003">Cell membrane</keyword>
<keyword id="KW-0139">CF(1)</keyword>
<keyword id="KW-0375">Hydrogen ion transport</keyword>
<keyword id="KW-0406">Ion transport</keyword>
<keyword id="KW-0472">Membrane</keyword>
<keyword id="KW-0547">Nucleotide-binding</keyword>
<keyword id="KW-1278">Translocase</keyword>
<keyword id="KW-0813">Transport</keyword>
<reference key="1">
    <citation type="journal article" date="2004" name="Science">
        <title>The complete genome sequence of Propionibacterium acnes, a commensal of human skin.</title>
        <authorList>
            <person name="Brueggemann H."/>
            <person name="Henne A."/>
            <person name="Hoster F."/>
            <person name="Liesegang H."/>
            <person name="Wiezer A."/>
            <person name="Strittmatter A."/>
            <person name="Hujer S."/>
            <person name="Duerre P."/>
            <person name="Gottschalk G."/>
        </authorList>
    </citation>
    <scope>NUCLEOTIDE SEQUENCE [LARGE SCALE GENOMIC DNA]</scope>
    <source>
        <strain>DSM 16379 / KPA171202</strain>
    </source>
</reference>
<proteinExistence type="inferred from homology"/>
<evidence type="ECO:0000255" key="1">
    <source>
        <dbReference type="HAMAP-Rule" id="MF_01346"/>
    </source>
</evidence>
<protein>
    <recommendedName>
        <fullName evidence="1">ATP synthase subunit alpha</fullName>
        <ecNumber evidence="1">7.1.2.2</ecNumber>
    </recommendedName>
    <alternativeName>
        <fullName evidence="1">ATP synthase F1 sector subunit alpha</fullName>
    </alternativeName>
    <alternativeName>
        <fullName evidence="1">F-ATPase subunit alpha</fullName>
    </alternativeName>
</protein>
<feature type="chain" id="PRO_0000238325" description="ATP synthase subunit alpha">
    <location>
        <begin position="1"/>
        <end position="545"/>
    </location>
</feature>
<feature type="binding site" evidence="1">
    <location>
        <begin position="174"/>
        <end position="181"/>
    </location>
    <ligand>
        <name>ATP</name>
        <dbReference type="ChEBI" id="CHEBI:30616"/>
    </ligand>
</feature>
<feature type="site" description="Required for activity" evidence="1">
    <location>
        <position position="375"/>
    </location>
</feature>
<comment type="function">
    <text evidence="1">Produces ATP from ADP in the presence of a proton gradient across the membrane. The alpha chain is a regulatory subunit.</text>
</comment>
<comment type="catalytic activity">
    <reaction evidence="1">
        <text>ATP + H2O + 4 H(+)(in) = ADP + phosphate + 5 H(+)(out)</text>
        <dbReference type="Rhea" id="RHEA:57720"/>
        <dbReference type="ChEBI" id="CHEBI:15377"/>
        <dbReference type="ChEBI" id="CHEBI:15378"/>
        <dbReference type="ChEBI" id="CHEBI:30616"/>
        <dbReference type="ChEBI" id="CHEBI:43474"/>
        <dbReference type="ChEBI" id="CHEBI:456216"/>
        <dbReference type="EC" id="7.1.2.2"/>
    </reaction>
</comment>
<comment type="subunit">
    <text evidence="1">F-type ATPases have 2 components, CF(1) - the catalytic core - and CF(0) - the membrane proton channel. CF(1) has five subunits: alpha(3), beta(3), gamma(1), delta(1), epsilon(1). CF(0) has three main subunits: a(1), b(2) and c(9-12). The alpha and beta chains form an alternating ring which encloses part of the gamma chain. CF(1) is attached to CF(0) by a central stalk formed by the gamma and epsilon chains, while a peripheral stalk is formed by the delta and b chains.</text>
</comment>
<comment type="subcellular location">
    <subcellularLocation>
        <location evidence="1">Cell membrane</location>
        <topology evidence="1">Peripheral membrane protein</topology>
    </subcellularLocation>
</comment>
<comment type="similarity">
    <text evidence="1">Belongs to the ATPase alpha/beta chains family.</text>
</comment>
<accession>Q6A8C5</accession>
<organism>
    <name type="scientific">Cutibacterium acnes (strain DSM 16379 / KPA171202)</name>
    <name type="common">Propionibacterium acnes</name>
    <dbReference type="NCBI Taxonomy" id="267747"/>
    <lineage>
        <taxon>Bacteria</taxon>
        <taxon>Bacillati</taxon>
        <taxon>Actinomycetota</taxon>
        <taxon>Actinomycetes</taxon>
        <taxon>Propionibacteriales</taxon>
        <taxon>Propionibacteriaceae</taxon>
        <taxon>Cutibacterium</taxon>
    </lineage>
</organism>
<name>ATPA_CUTAK</name>
<gene>
    <name evidence="1" type="primary">atpA</name>
    <name type="ordered locus">PPA1241</name>
</gene>
<dbReference type="EC" id="7.1.2.2" evidence="1"/>
<dbReference type="EMBL" id="AE017283">
    <property type="protein sequence ID" value="AAT82990.1"/>
    <property type="molecule type" value="Genomic_DNA"/>
</dbReference>
<dbReference type="RefSeq" id="WP_002516787.1">
    <property type="nucleotide sequence ID" value="NZ_CP025935.1"/>
</dbReference>
<dbReference type="SMR" id="Q6A8C5"/>
<dbReference type="EnsemblBacteria" id="AAT82990">
    <property type="protein sequence ID" value="AAT82990"/>
    <property type="gene ID" value="PPA1241"/>
</dbReference>
<dbReference type="GeneID" id="92857211"/>
<dbReference type="KEGG" id="pac:PPA1241"/>
<dbReference type="eggNOG" id="COG0056">
    <property type="taxonomic scope" value="Bacteria"/>
</dbReference>
<dbReference type="HOGENOM" id="CLU_010091_2_1_11"/>
<dbReference type="Proteomes" id="UP000000603">
    <property type="component" value="Chromosome"/>
</dbReference>
<dbReference type="GO" id="GO:0005886">
    <property type="term" value="C:plasma membrane"/>
    <property type="evidence" value="ECO:0007669"/>
    <property type="project" value="UniProtKB-SubCell"/>
</dbReference>
<dbReference type="GO" id="GO:0045259">
    <property type="term" value="C:proton-transporting ATP synthase complex"/>
    <property type="evidence" value="ECO:0007669"/>
    <property type="project" value="UniProtKB-KW"/>
</dbReference>
<dbReference type="GO" id="GO:0043531">
    <property type="term" value="F:ADP binding"/>
    <property type="evidence" value="ECO:0007669"/>
    <property type="project" value="TreeGrafter"/>
</dbReference>
<dbReference type="GO" id="GO:0005524">
    <property type="term" value="F:ATP binding"/>
    <property type="evidence" value="ECO:0007669"/>
    <property type="project" value="UniProtKB-UniRule"/>
</dbReference>
<dbReference type="GO" id="GO:0046933">
    <property type="term" value="F:proton-transporting ATP synthase activity, rotational mechanism"/>
    <property type="evidence" value="ECO:0007669"/>
    <property type="project" value="UniProtKB-UniRule"/>
</dbReference>
<dbReference type="CDD" id="cd18113">
    <property type="entry name" value="ATP-synt_F1_alpha_C"/>
    <property type="match status" value="1"/>
</dbReference>
<dbReference type="CDD" id="cd18116">
    <property type="entry name" value="ATP-synt_F1_alpha_N"/>
    <property type="match status" value="1"/>
</dbReference>
<dbReference type="CDD" id="cd01132">
    <property type="entry name" value="F1-ATPase_alpha_CD"/>
    <property type="match status" value="1"/>
</dbReference>
<dbReference type="FunFam" id="1.20.150.20:FF:000001">
    <property type="entry name" value="ATP synthase subunit alpha"/>
    <property type="match status" value="1"/>
</dbReference>
<dbReference type="FunFam" id="3.40.50.300:FF:000002">
    <property type="entry name" value="ATP synthase subunit alpha"/>
    <property type="match status" value="1"/>
</dbReference>
<dbReference type="Gene3D" id="2.40.30.20">
    <property type="match status" value="1"/>
</dbReference>
<dbReference type="Gene3D" id="1.20.150.20">
    <property type="entry name" value="ATP synthase alpha/beta chain, C-terminal domain"/>
    <property type="match status" value="1"/>
</dbReference>
<dbReference type="Gene3D" id="3.40.50.300">
    <property type="entry name" value="P-loop containing nucleotide triphosphate hydrolases"/>
    <property type="match status" value="1"/>
</dbReference>
<dbReference type="HAMAP" id="MF_01346">
    <property type="entry name" value="ATP_synth_alpha_bact"/>
    <property type="match status" value="1"/>
</dbReference>
<dbReference type="InterPro" id="IPR023366">
    <property type="entry name" value="ATP_synth_asu-like_sf"/>
</dbReference>
<dbReference type="InterPro" id="IPR000793">
    <property type="entry name" value="ATP_synth_asu_C"/>
</dbReference>
<dbReference type="InterPro" id="IPR038376">
    <property type="entry name" value="ATP_synth_asu_C_sf"/>
</dbReference>
<dbReference type="InterPro" id="IPR033732">
    <property type="entry name" value="ATP_synth_F1_a_nt-bd_dom"/>
</dbReference>
<dbReference type="InterPro" id="IPR005294">
    <property type="entry name" value="ATP_synth_F1_asu"/>
</dbReference>
<dbReference type="InterPro" id="IPR020003">
    <property type="entry name" value="ATPase_a/bsu_AS"/>
</dbReference>
<dbReference type="InterPro" id="IPR004100">
    <property type="entry name" value="ATPase_F1/V1/A1_a/bsu_N"/>
</dbReference>
<dbReference type="InterPro" id="IPR036121">
    <property type="entry name" value="ATPase_F1/V1/A1_a/bsu_N_sf"/>
</dbReference>
<dbReference type="InterPro" id="IPR000194">
    <property type="entry name" value="ATPase_F1/V1/A1_a/bsu_nucl-bd"/>
</dbReference>
<dbReference type="InterPro" id="IPR027417">
    <property type="entry name" value="P-loop_NTPase"/>
</dbReference>
<dbReference type="NCBIfam" id="TIGR00962">
    <property type="entry name" value="atpA"/>
    <property type="match status" value="1"/>
</dbReference>
<dbReference type="NCBIfam" id="NF009884">
    <property type="entry name" value="PRK13343.1"/>
    <property type="match status" value="1"/>
</dbReference>
<dbReference type="PANTHER" id="PTHR48082">
    <property type="entry name" value="ATP SYNTHASE SUBUNIT ALPHA, MITOCHONDRIAL"/>
    <property type="match status" value="1"/>
</dbReference>
<dbReference type="PANTHER" id="PTHR48082:SF2">
    <property type="entry name" value="ATP SYNTHASE SUBUNIT ALPHA, MITOCHONDRIAL"/>
    <property type="match status" value="1"/>
</dbReference>
<dbReference type="Pfam" id="PF00006">
    <property type="entry name" value="ATP-synt_ab"/>
    <property type="match status" value="1"/>
</dbReference>
<dbReference type="Pfam" id="PF00306">
    <property type="entry name" value="ATP-synt_ab_C"/>
    <property type="match status" value="1"/>
</dbReference>
<dbReference type="Pfam" id="PF02874">
    <property type="entry name" value="ATP-synt_ab_N"/>
    <property type="match status" value="1"/>
</dbReference>
<dbReference type="SUPFAM" id="SSF47917">
    <property type="entry name" value="C-terminal domain of alpha and beta subunits of F1 ATP synthase"/>
    <property type="match status" value="1"/>
</dbReference>
<dbReference type="SUPFAM" id="SSF50615">
    <property type="entry name" value="N-terminal domain of alpha and beta subunits of F1 ATP synthase"/>
    <property type="match status" value="1"/>
</dbReference>
<dbReference type="SUPFAM" id="SSF52540">
    <property type="entry name" value="P-loop containing nucleoside triphosphate hydrolases"/>
    <property type="match status" value="1"/>
</dbReference>
<dbReference type="PROSITE" id="PS00152">
    <property type="entry name" value="ATPASE_ALPHA_BETA"/>
    <property type="match status" value="1"/>
</dbReference>
<sequence>MAELTIRPEEIRDALDNFVQNYEPETAVREEVGTVVTSGDGIAHVEGLPSAMANELLRFENGTMGIALNLEERQIGVVVLGDSDGIDEGSTVRGTGEVLSVPVGEGYLGRVVDAMGNPVDGLGEIKGVEGRRALEIQAAGVMDRQEVREPLQTGLKAIDSMIPIGRGQRQLIIGDRKTGKTAIAIDTIINQKGNWESGDPQKQVRCIYVAIGQKGSTVAEVKGALEKAGAMEYTTIVHAPASDPAGFKYIAPYAGSAIGQHWMYQGKHVLIIFDDLTKQAEAYRAMSLLLRRPPGREAYPGDVFYLHSRLLERCAKLSDDLGGGSMTGLPIIETKANDVSAFIPTNVISITDGQIFLQSDLFNANQRPAVDVGISVSRVGGAAQIKAMKSVAGTLKISLAQYRDMQAFAMFASDLDDTSRRQLDRGARLMELLKQGQFSPYPVEEQVISVWGGTTGKFDDVPVGDVLRFEGDVLEYLRSHSNVLTTIRETGKFDDEAKDAAAAAFEEVKKGFKTSDGKMLAGHEEFSPMADEDIDQAKIVRAKKG</sequence>